<reference key="1">
    <citation type="journal article" date="1977" name="Chem. Pharm. Bull.">
        <title>Chemical investigation of the hornet (Vespa xanthoptera Cameron) venom. The structure of a new bradykinin analogue vespakinin-X.</title>
        <authorList>
            <person name="Yasuhara T."/>
            <person name="Yoshida H."/>
            <person name="Nakajima T."/>
        </authorList>
    </citation>
    <scope>PROTEIN SEQUENCE</scope>
    <scope>SUBCELLULAR LOCATION</scope>
    <source>
        <tissue>Venom</tissue>
    </source>
</reference>
<name>BRK_VESXA</name>
<dbReference type="PIR" id="A61359">
    <property type="entry name" value="A61359"/>
</dbReference>
<dbReference type="GO" id="GO:0005576">
    <property type="term" value="C:extracellular region"/>
    <property type="evidence" value="ECO:0007669"/>
    <property type="project" value="UniProtKB-SubCell"/>
</dbReference>
<dbReference type="GO" id="GO:0090729">
    <property type="term" value="F:toxin activity"/>
    <property type="evidence" value="ECO:0007669"/>
    <property type="project" value="UniProtKB-KW"/>
</dbReference>
<dbReference type="GO" id="GO:0008217">
    <property type="term" value="P:regulation of blood pressure"/>
    <property type="evidence" value="ECO:0007669"/>
    <property type="project" value="UniProtKB-KW"/>
</dbReference>
<dbReference type="GO" id="GO:0042311">
    <property type="term" value="P:vasodilation"/>
    <property type="evidence" value="ECO:0007669"/>
    <property type="project" value="UniProtKB-KW"/>
</dbReference>
<proteinExistence type="evidence at protein level"/>
<keyword id="KW-1222">Bradykinin receptor impairing toxin</keyword>
<keyword id="KW-0903">Direct protein sequencing</keyword>
<keyword id="KW-1213">G-protein coupled receptor impairing toxin</keyword>
<keyword id="KW-0382">Hypotensive agent</keyword>
<keyword id="KW-0964">Secreted</keyword>
<keyword id="KW-0800">Toxin</keyword>
<keyword id="KW-0838">Vasoactive</keyword>
<keyword id="KW-0840">Vasodilator</keyword>
<accession>Q7M3T2</accession>
<protein>
    <recommendedName>
        <fullName evidence="3">Vespakinin-X</fullName>
    </recommendedName>
    <alternativeName>
        <fullName evidence="4">Bradykinin-related peptide</fullName>
    </alternativeName>
</protein>
<comment type="function">
    <text evidence="1">Bradykinins are a potent but short-lived agent of arteriolar dilation and increased capillary permeability (By similarity). May target bradykinin receptors (BDKRB). May cause hypotension.</text>
</comment>
<comment type="subcellular location">
    <subcellularLocation>
        <location evidence="2">Secreted</location>
    </subcellularLocation>
</comment>
<comment type="tissue specificity">
    <text evidence="5">Expressed by the venom gland.</text>
</comment>
<comment type="similarity">
    <text evidence="4">Belongs to the bradykinin-related peptide family.</text>
</comment>
<sequence>ARPPGFSPFRIV</sequence>
<feature type="peptide" id="PRO_0000043518" description="Vespakinin-X" evidence="2">
    <location>
        <begin position="1"/>
        <end position="12"/>
    </location>
</feature>
<evidence type="ECO:0000250" key="1"/>
<evidence type="ECO:0000269" key="2">
    <source>
    </source>
</evidence>
<evidence type="ECO:0000303" key="3">
    <source>
    </source>
</evidence>
<evidence type="ECO:0000305" key="4"/>
<evidence type="ECO:0000305" key="5">
    <source>
    </source>
</evidence>
<organism>
    <name type="scientific">Vespa xanthoptera</name>
    <name type="common">Japanese yellow hornet</name>
    <name type="synonym">Vespa simillima xanthoptera</name>
    <dbReference type="NCBI Taxonomy" id="7448"/>
    <lineage>
        <taxon>Eukaryota</taxon>
        <taxon>Metazoa</taxon>
        <taxon>Ecdysozoa</taxon>
        <taxon>Arthropoda</taxon>
        <taxon>Hexapoda</taxon>
        <taxon>Insecta</taxon>
        <taxon>Pterygota</taxon>
        <taxon>Neoptera</taxon>
        <taxon>Endopterygota</taxon>
        <taxon>Hymenoptera</taxon>
        <taxon>Apocrita</taxon>
        <taxon>Aculeata</taxon>
        <taxon>Vespoidea</taxon>
        <taxon>Vespidae</taxon>
        <taxon>Vespinae</taxon>
        <taxon>Vespa</taxon>
    </lineage>
</organism>